<sequence>MLNSRSVGSTGSNNTPLGRRRFDEKPDSLPPLPDANGMSNGYRDSYKSNSRMDHRPDGYHDGRGRRAYRKHYWGHPTPIEEMLPSQMELETAVKSCMTMEQLELYSLNVRLEEITQKLRTGDVVPHHRERSPSPPPQYDNHGRRLNTREIRYKKKLEDERHRIIERAMKMVPGFRAPSDYRRPAKTQEKVYVPVKDYPEINFIGLLIGPRGHTLKDMEAKSGAKIAIRGKGSVKEGKGRSDPSVRGNMEEDLHCLVTADSEDKINHAIKLIDNVIQTAASVPEGQNDLKRNQLRQLATLNGTLRDDENQVCQNCGNVGHRRFDCPERINHTMNIVCRHCGSIGHIARDCPVRDQQPPMADSTADREYQSLMQELGGGSAISNGNGEPQKSIEFSESGAASPQAGHPPPWAAASTSVSSSTSSPAPWAKPASSAAPSNPAPWQQPAAPQSAPALSMNPSSLPPWQQPTQQSAVQPSNLVPSQNAPFIPGTSAPLPPTTFAPPGVPLPPIPGAPGMPNLNMSQPPMVPPGMALPPGMPAPFPGYPAVPAMPGIPGATAPPGAPGSYNTSESSNLNAPPGVSMPNGYSNR</sequence>
<protein>
    <recommendedName>
        <fullName>Branchpoint-bridging protein</fullName>
    </recommendedName>
    <alternativeName>
        <fullName>Splicing factor 1</fullName>
    </alternativeName>
    <alternativeName>
        <fullName>Zinc finger protein bpb1</fullName>
    </alternativeName>
</protein>
<organism>
    <name type="scientific">Schizosaccharomyces pombe (strain 972 / ATCC 24843)</name>
    <name type="common">Fission yeast</name>
    <dbReference type="NCBI Taxonomy" id="284812"/>
    <lineage>
        <taxon>Eukaryota</taxon>
        <taxon>Fungi</taxon>
        <taxon>Dikarya</taxon>
        <taxon>Ascomycota</taxon>
        <taxon>Taphrinomycotina</taxon>
        <taxon>Schizosaccharomycetes</taxon>
        <taxon>Schizosaccharomycetales</taxon>
        <taxon>Schizosaccharomycetaceae</taxon>
        <taxon>Schizosaccharomyces</taxon>
    </lineage>
</organism>
<keyword id="KW-0963">Cytoplasm</keyword>
<keyword id="KW-0479">Metal-binding</keyword>
<keyword id="KW-0507">mRNA processing</keyword>
<keyword id="KW-0508">mRNA splicing</keyword>
<keyword id="KW-0539">Nucleus</keyword>
<keyword id="KW-0597">Phosphoprotein</keyword>
<keyword id="KW-1185">Reference proteome</keyword>
<keyword id="KW-0677">Repeat</keyword>
<keyword id="KW-0694">RNA-binding</keyword>
<keyword id="KW-0747">Spliceosome</keyword>
<keyword id="KW-0862">Zinc</keyword>
<keyword id="KW-0863">Zinc-finger</keyword>
<feature type="chain" id="PRO_0000256150" description="Branchpoint-bridging protein">
    <location>
        <begin position="1"/>
        <end position="587"/>
    </location>
</feature>
<feature type="domain" description="KH" evidence="2">
    <location>
        <begin position="191"/>
        <end position="271"/>
    </location>
</feature>
<feature type="zinc finger region" description="CCHC-type 1" evidence="1">
    <location>
        <begin position="309"/>
        <end position="326"/>
    </location>
</feature>
<feature type="zinc finger region" description="CCHC-type 2" evidence="1">
    <location>
        <begin position="334"/>
        <end position="351"/>
    </location>
</feature>
<feature type="region of interest" description="Disordered" evidence="3">
    <location>
        <begin position="1"/>
        <end position="64"/>
    </location>
</feature>
<feature type="region of interest" description="Disordered" evidence="3">
    <location>
        <begin position="121"/>
        <end position="142"/>
    </location>
</feature>
<feature type="region of interest" description="Disordered" evidence="3">
    <location>
        <begin position="375"/>
        <end position="490"/>
    </location>
</feature>
<feature type="region of interest" description="Disordered" evidence="3">
    <location>
        <begin position="551"/>
        <end position="587"/>
    </location>
</feature>
<feature type="compositionally biased region" description="Polar residues" evidence="3">
    <location>
        <begin position="1"/>
        <end position="16"/>
    </location>
</feature>
<feature type="compositionally biased region" description="Basic and acidic residues" evidence="3">
    <location>
        <begin position="44"/>
        <end position="64"/>
    </location>
</feature>
<feature type="compositionally biased region" description="Polar residues" evidence="3">
    <location>
        <begin position="379"/>
        <end position="399"/>
    </location>
</feature>
<feature type="compositionally biased region" description="Low complexity" evidence="3">
    <location>
        <begin position="410"/>
        <end position="454"/>
    </location>
</feature>
<feature type="compositionally biased region" description="Polar residues" evidence="3">
    <location>
        <begin position="465"/>
        <end position="483"/>
    </location>
</feature>
<feature type="compositionally biased region" description="Polar residues" evidence="3">
    <location>
        <begin position="563"/>
        <end position="573"/>
    </location>
</feature>
<feature type="modified residue" description="Phosphoserine" evidence="6">
    <location>
        <position position="131"/>
    </location>
</feature>
<feature type="modified residue" description="Phosphoserine" evidence="6">
    <location>
        <position position="133"/>
    </location>
</feature>
<evidence type="ECO:0000255" key="1">
    <source>
        <dbReference type="PROSITE-ProRule" id="PRU00047"/>
    </source>
</evidence>
<evidence type="ECO:0000255" key="2">
    <source>
        <dbReference type="PROSITE-ProRule" id="PRU00117"/>
    </source>
</evidence>
<evidence type="ECO:0000256" key="3">
    <source>
        <dbReference type="SAM" id="MobiDB-lite"/>
    </source>
</evidence>
<evidence type="ECO:0000269" key="4">
    <source>
    </source>
</evidence>
<evidence type="ECO:0000269" key="5">
    <source>
    </source>
</evidence>
<evidence type="ECO:0000269" key="6">
    <source>
    </source>
</evidence>
<evidence type="ECO:0000305" key="7"/>
<reference key="1">
    <citation type="submission" date="1998-06" db="EMBL/GenBank/DDBJ databases">
        <title>The fission yeast homolog of the splicing factor BBP/SF1.</title>
        <authorList>
            <person name="Potashkin J.A."/>
            <person name="Witt I."/>
        </authorList>
    </citation>
    <scope>NUCLEOTIDE SEQUENCE [MRNA]</scope>
    <source>
        <strain>972 / ATCC 24843</strain>
    </source>
</reference>
<reference key="2">
    <citation type="journal article" date="2002" name="Nature">
        <title>The genome sequence of Schizosaccharomyces pombe.</title>
        <authorList>
            <person name="Wood V."/>
            <person name="Gwilliam R."/>
            <person name="Rajandream M.A."/>
            <person name="Lyne M.H."/>
            <person name="Lyne R."/>
            <person name="Stewart A."/>
            <person name="Sgouros J.G."/>
            <person name="Peat N."/>
            <person name="Hayles J."/>
            <person name="Baker S.G."/>
            <person name="Basham D."/>
            <person name="Bowman S."/>
            <person name="Brooks K."/>
            <person name="Brown D."/>
            <person name="Brown S."/>
            <person name="Chillingworth T."/>
            <person name="Churcher C.M."/>
            <person name="Collins M."/>
            <person name="Connor R."/>
            <person name="Cronin A."/>
            <person name="Davis P."/>
            <person name="Feltwell T."/>
            <person name="Fraser A."/>
            <person name="Gentles S."/>
            <person name="Goble A."/>
            <person name="Hamlin N."/>
            <person name="Harris D.E."/>
            <person name="Hidalgo J."/>
            <person name="Hodgson G."/>
            <person name="Holroyd S."/>
            <person name="Hornsby T."/>
            <person name="Howarth S."/>
            <person name="Huckle E.J."/>
            <person name="Hunt S."/>
            <person name="Jagels K."/>
            <person name="James K.D."/>
            <person name="Jones L."/>
            <person name="Jones M."/>
            <person name="Leather S."/>
            <person name="McDonald S."/>
            <person name="McLean J."/>
            <person name="Mooney P."/>
            <person name="Moule S."/>
            <person name="Mungall K.L."/>
            <person name="Murphy L.D."/>
            <person name="Niblett D."/>
            <person name="Odell C."/>
            <person name="Oliver K."/>
            <person name="O'Neil S."/>
            <person name="Pearson D."/>
            <person name="Quail M.A."/>
            <person name="Rabbinowitsch E."/>
            <person name="Rutherford K.M."/>
            <person name="Rutter S."/>
            <person name="Saunders D."/>
            <person name="Seeger K."/>
            <person name="Sharp S."/>
            <person name="Skelton J."/>
            <person name="Simmonds M.N."/>
            <person name="Squares R."/>
            <person name="Squares S."/>
            <person name="Stevens K."/>
            <person name="Taylor K."/>
            <person name="Taylor R.G."/>
            <person name="Tivey A."/>
            <person name="Walsh S.V."/>
            <person name="Warren T."/>
            <person name="Whitehead S."/>
            <person name="Woodward J.R."/>
            <person name="Volckaert G."/>
            <person name="Aert R."/>
            <person name="Robben J."/>
            <person name="Grymonprez B."/>
            <person name="Weltjens I."/>
            <person name="Vanstreels E."/>
            <person name="Rieger M."/>
            <person name="Schaefer M."/>
            <person name="Mueller-Auer S."/>
            <person name="Gabel C."/>
            <person name="Fuchs M."/>
            <person name="Duesterhoeft A."/>
            <person name="Fritzc C."/>
            <person name="Holzer E."/>
            <person name="Moestl D."/>
            <person name="Hilbert H."/>
            <person name="Borzym K."/>
            <person name="Langer I."/>
            <person name="Beck A."/>
            <person name="Lehrach H."/>
            <person name="Reinhardt R."/>
            <person name="Pohl T.M."/>
            <person name="Eger P."/>
            <person name="Zimmermann W."/>
            <person name="Wedler H."/>
            <person name="Wambutt R."/>
            <person name="Purnelle B."/>
            <person name="Goffeau A."/>
            <person name="Cadieu E."/>
            <person name="Dreano S."/>
            <person name="Gloux S."/>
            <person name="Lelaure V."/>
            <person name="Mottier S."/>
            <person name="Galibert F."/>
            <person name="Aves S.J."/>
            <person name="Xiang Z."/>
            <person name="Hunt C."/>
            <person name="Moore K."/>
            <person name="Hurst S.M."/>
            <person name="Lucas M."/>
            <person name="Rochet M."/>
            <person name="Gaillardin C."/>
            <person name="Tallada V.A."/>
            <person name="Garzon A."/>
            <person name="Thode G."/>
            <person name="Daga R.R."/>
            <person name="Cruzado L."/>
            <person name="Jimenez J."/>
            <person name="Sanchez M."/>
            <person name="del Rey F."/>
            <person name="Benito J."/>
            <person name="Dominguez A."/>
            <person name="Revuelta J.L."/>
            <person name="Moreno S."/>
            <person name="Armstrong J."/>
            <person name="Forsburg S.L."/>
            <person name="Cerutti L."/>
            <person name="Lowe T."/>
            <person name="McCombie W.R."/>
            <person name="Paulsen I."/>
            <person name="Potashkin J."/>
            <person name="Shpakovski G.V."/>
            <person name="Ussery D."/>
            <person name="Barrell B.G."/>
            <person name="Nurse P."/>
        </authorList>
    </citation>
    <scope>NUCLEOTIDE SEQUENCE [LARGE SCALE GENOMIC DNA]</scope>
    <source>
        <strain>972 / ATCC 24843</strain>
    </source>
</reference>
<reference key="3">
    <citation type="journal article" date="2002" name="EMBO J.">
        <title>Pre-spliceosome formation in S.pombe requires a stable complex of SF1-U2AF(59)-U2AF(23).</title>
        <authorList>
            <person name="Huang T."/>
            <person name="Vilardell J."/>
            <person name="Query C.C."/>
        </authorList>
    </citation>
    <scope>FUNCTION</scope>
    <scope>INTERACTION WITH U2AF59 AND U2AF23</scope>
</reference>
<reference key="4">
    <citation type="journal article" date="2006" name="Nat. Biotechnol.">
        <title>ORFeome cloning and global analysis of protein localization in the fission yeast Schizosaccharomyces pombe.</title>
        <authorList>
            <person name="Matsuyama A."/>
            <person name="Arai R."/>
            <person name="Yashiroda Y."/>
            <person name="Shirai A."/>
            <person name="Kamata A."/>
            <person name="Sekido S."/>
            <person name="Kobayashi Y."/>
            <person name="Hashimoto A."/>
            <person name="Hamamoto M."/>
            <person name="Hiraoka Y."/>
            <person name="Horinouchi S."/>
            <person name="Yoshida M."/>
        </authorList>
    </citation>
    <scope>SUBCELLULAR LOCATION [LARGE SCALE ANALYSIS]</scope>
</reference>
<reference key="5">
    <citation type="journal article" date="2008" name="J. Proteome Res.">
        <title>Phosphoproteome analysis of fission yeast.</title>
        <authorList>
            <person name="Wilson-Grady J.T."/>
            <person name="Villen J."/>
            <person name="Gygi S.P."/>
        </authorList>
    </citation>
    <scope>PHOSPHORYLATION [LARGE SCALE ANALYSIS] AT SER-131 AND SER-133</scope>
    <scope>IDENTIFICATION BY MASS SPECTROMETRY</scope>
</reference>
<proteinExistence type="evidence at protein level"/>
<gene>
    <name type="primary">bpb1</name>
    <name type="synonym">bbp</name>
    <name type="synonym">sf1</name>
    <name type="ORF">SPCC962.06c</name>
</gene>
<comment type="function">
    <text evidence="4">Necessary for the splicing of pre-mRNA. The BPB1(SF1)-u2af59-u2af23 complex has a role in the recognition of the branch site (5'-UACUAAC-3'), the pyrimidine tract and the 3'-splice site at the 3'-end of introns.</text>
</comment>
<comment type="subunit">
    <text>U2AF large subunit (u2af59), U2AF small subunit (u2af23) and bpb1 interact to form a complex required for complex A formation.</text>
</comment>
<comment type="subcellular location">
    <subcellularLocation>
        <location evidence="5">Cytoplasm</location>
    </subcellularLocation>
    <subcellularLocation>
        <location evidence="5">Nucleus</location>
    </subcellularLocation>
</comment>
<comment type="similarity">
    <text evidence="7">Belongs to the BBP/SF1 family.</text>
</comment>
<accession>O74555</accession>
<dbReference type="EMBL" id="AF073779">
    <property type="protein sequence ID" value="AAF02214.1"/>
    <property type="molecule type" value="mRNA"/>
</dbReference>
<dbReference type="EMBL" id="CU329672">
    <property type="protein sequence ID" value="CAA20438.1"/>
    <property type="molecule type" value="Genomic_DNA"/>
</dbReference>
<dbReference type="PIR" id="T41653">
    <property type="entry name" value="T41653"/>
</dbReference>
<dbReference type="RefSeq" id="NP_587871.1">
    <property type="nucleotide sequence ID" value="NM_001022863.2"/>
</dbReference>
<dbReference type="SMR" id="O74555"/>
<dbReference type="BioGRID" id="275413">
    <property type="interactions" value="13"/>
</dbReference>
<dbReference type="FunCoup" id="O74555">
    <property type="interactions" value="869"/>
</dbReference>
<dbReference type="STRING" id="284812.O74555"/>
<dbReference type="iPTMnet" id="O74555"/>
<dbReference type="PaxDb" id="4896-SPCC962.06c.1"/>
<dbReference type="EnsemblFungi" id="SPCC962.06c.1">
    <property type="protein sequence ID" value="SPCC962.06c.1:pep"/>
    <property type="gene ID" value="SPCC962.06c"/>
</dbReference>
<dbReference type="GeneID" id="2538832"/>
<dbReference type="KEGG" id="spo:2538832"/>
<dbReference type="PomBase" id="SPCC962.06c">
    <property type="gene designation" value="bpb1"/>
</dbReference>
<dbReference type="VEuPathDB" id="FungiDB:SPCC962.06c"/>
<dbReference type="eggNOG" id="KOG0119">
    <property type="taxonomic scope" value="Eukaryota"/>
</dbReference>
<dbReference type="HOGENOM" id="CLU_016864_1_1_1"/>
<dbReference type="InParanoid" id="O74555"/>
<dbReference type="OMA" id="EDSNCKI"/>
<dbReference type="PhylomeDB" id="O74555"/>
<dbReference type="PRO" id="PR:O74555"/>
<dbReference type="Proteomes" id="UP000002485">
    <property type="component" value="Chromosome III"/>
</dbReference>
<dbReference type="GO" id="GO:0000243">
    <property type="term" value="C:commitment complex"/>
    <property type="evidence" value="ECO:0000314"/>
    <property type="project" value="PomBase"/>
</dbReference>
<dbReference type="GO" id="GO:0005829">
    <property type="term" value="C:cytosol"/>
    <property type="evidence" value="ECO:0000314"/>
    <property type="project" value="PomBase"/>
</dbReference>
<dbReference type="GO" id="GO:0005634">
    <property type="term" value="C:nucleus"/>
    <property type="evidence" value="ECO:0000314"/>
    <property type="project" value="PomBase"/>
</dbReference>
<dbReference type="GO" id="GO:0005681">
    <property type="term" value="C:spliceosomal complex"/>
    <property type="evidence" value="ECO:0000314"/>
    <property type="project" value="PomBase"/>
</dbReference>
<dbReference type="GO" id="GO:0071004">
    <property type="term" value="C:U2-type prespliceosome"/>
    <property type="evidence" value="ECO:0000314"/>
    <property type="project" value="PomBase"/>
</dbReference>
<dbReference type="GO" id="GO:0003729">
    <property type="term" value="F:mRNA binding"/>
    <property type="evidence" value="ECO:0000318"/>
    <property type="project" value="GO_Central"/>
</dbReference>
<dbReference type="GO" id="GO:0003723">
    <property type="term" value="F:RNA binding"/>
    <property type="evidence" value="ECO:0000255"/>
    <property type="project" value="PomBase"/>
</dbReference>
<dbReference type="GO" id="GO:0008270">
    <property type="term" value="F:zinc ion binding"/>
    <property type="evidence" value="ECO:0007669"/>
    <property type="project" value="UniProtKB-KW"/>
</dbReference>
<dbReference type="GO" id="GO:0000348">
    <property type="term" value="P:mRNA branch site recognition"/>
    <property type="evidence" value="ECO:0000304"/>
    <property type="project" value="PomBase"/>
</dbReference>
<dbReference type="GO" id="GO:0045292">
    <property type="term" value="P:mRNA cis splicing, via spliceosome"/>
    <property type="evidence" value="ECO:0000315"/>
    <property type="project" value="PomBase"/>
</dbReference>
<dbReference type="GO" id="GO:0048024">
    <property type="term" value="P:regulation of mRNA splicing, via spliceosome"/>
    <property type="evidence" value="ECO:0000318"/>
    <property type="project" value="GO_Central"/>
</dbReference>
<dbReference type="CDD" id="cd02395">
    <property type="entry name" value="KH-I_BBP"/>
    <property type="match status" value="1"/>
</dbReference>
<dbReference type="FunFam" id="4.10.60.10:FF:000030">
    <property type="entry name" value="Branchpoint-bridging protein"/>
    <property type="match status" value="1"/>
</dbReference>
<dbReference type="FunFam" id="3.30.1370.10:FF:000024">
    <property type="entry name" value="Branchpoint-bridging protein-like protein"/>
    <property type="match status" value="1"/>
</dbReference>
<dbReference type="Gene3D" id="6.10.140.1790">
    <property type="match status" value="1"/>
</dbReference>
<dbReference type="Gene3D" id="3.30.1370.10">
    <property type="entry name" value="K Homology domain, type 1"/>
    <property type="match status" value="1"/>
</dbReference>
<dbReference type="Gene3D" id="4.10.60.10">
    <property type="entry name" value="Zinc finger, CCHC-type"/>
    <property type="match status" value="1"/>
</dbReference>
<dbReference type="InterPro" id="IPR045071">
    <property type="entry name" value="BBP-like"/>
</dbReference>
<dbReference type="InterPro" id="IPR055256">
    <property type="entry name" value="KH_1_KHDC4/BBP-like"/>
</dbReference>
<dbReference type="InterPro" id="IPR004087">
    <property type="entry name" value="KH_dom"/>
</dbReference>
<dbReference type="InterPro" id="IPR036612">
    <property type="entry name" value="KH_dom_type_1_sf"/>
</dbReference>
<dbReference type="InterPro" id="IPR032570">
    <property type="entry name" value="SF1-HH"/>
</dbReference>
<dbReference type="InterPro" id="IPR047086">
    <property type="entry name" value="SF1-HH_sf"/>
</dbReference>
<dbReference type="InterPro" id="IPR001878">
    <property type="entry name" value="Znf_CCHC"/>
</dbReference>
<dbReference type="InterPro" id="IPR036875">
    <property type="entry name" value="Znf_CCHC_sf"/>
</dbReference>
<dbReference type="PANTHER" id="PTHR11208">
    <property type="entry name" value="RNA-BINDING PROTEIN RELATED"/>
    <property type="match status" value="1"/>
</dbReference>
<dbReference type="PANTHER" id="PTHR11208:SF45">
    <property type="entry name" value="SPLICING FACTOR 1"/>
    <property type="match status" value="1"/>
</dbReference>
<dbReference type="Pfam" id="PF22675">
    <property type="entry name" value="KH-I_KHDC4-BBP"/>
    <property type="match status" value="1"/>
</dbReference>
<dbReference type="Pfam" id="PF16275">
    <property type="entry name" value="SF1-HH"/>
    <property type="match status" value="1"/>
</dbReference>
<dbReference type="Pfam" id="PF00098">
    <property type="entry name" value="zf-CCHC"/>
    <property type="match status" value="2"/>
</dbReference>
<dbReference type="SMART" id="SM00322">
    <property type="entry name" value="KH"/>
    <property type="match status" value="1"/>
</dbReference>
<dbReference type="SMART" id="SM00343">
    <property type="entry name" value="ZnF_C2HC"/>
    <property type="match status" value="2"/>
</dbReference>
<dbReference type="SUPFAM" id="SSF54791">
    <property type="entry name" value="Eukaryotic type KH-domain (KH-domain type I)"/>
    <property type="match status" value="1"/>
</dbReference>
<dbReference type="SUPFAM" id="SSF57756">
    <property type="entry name" value="Retrovirus zinc finger-like domains"/>
    <property type="match status" value="1"/>
</dbReference>
<dbReference type="PROSITE" id="PS50084">
    <property type="entry name" value="KH_TYPE_1"/>
    <property type="match status" value="1"/>
</dbReference>
<dbReference type="PROSITE" id="PS50158">
    <property type="entry name" value="ZF_CCHC"/>
    <property type="match status" value="2"/>
</dbReference>
<name>BBP_SCHPO</name>